<gene>
    <name type="primary">TAS2R50</name>
</gene>
<sequence>MITFLYIFFSILILVLFVLGNFANGFIALVNFIDWVKRKKISSADQILTALAVSRIGLLWALLLNWYLTVLNPAFYSVELRITSYNAWVVTNHFSMWLAASLSIFYLLKIANFSNLIFLHLKRRVRSVILVILLGTLIFLVCHLLVANMDESMWAEEYEGNMTGKMKLRNTVHLSYLTVTTLWSFIPFTLSLISFLMLICSLCKHLKKMQLHGEGSQDLSTKVHIKALQTLISFLLLCAIFFLFLIISVWSPRRLQNDPVVMVSKAVGNIYLAFDSFILIWRTKKLKHTFLLILCQIRC</sequence>
<proteinExistence type="inferred from homology"/>
<organism>
    <name type="scientific">Gorilla gorilla gorilla</name>
    <name type="common">Western lowland gorilla</name>
    <dbReference type="NCBI Taxonomy" id="9595"/>
    <lineage>
        <taxon>Eukaryota</taxon>
        <taxon>Metazoa</taxon>
        <taxon>Chordata</taxon>
        <taxon>Craniata</taxon>
        <taxon>Vertebrata</taxon>
        <taxon>Euteleostomi</taxon>
        <taxon>Mammalia</taxon>
        <taxon>Eutheria</taxon>
        <taxon>Euarchontoglires</taxon>
        <taxon>Primates</taxon>
        <taxon>Haplorrhini</taxon>
        <taxon>Catarrhini</taxon>
        <taxon>Hominidae</taxon>
        <taxon>Gorilla</taxon>
    </lineage>
</organism>
<keyword id="KW-0297">G-protein coupled receptor</keyword>
<keyword id="KW-0325">Glycoprotein</keyword>
<keyword id="KW-0472">Membrane</keyword>
<keyword id="KW-0675">Receptor</keyword>
<keyword id="KW-1185">Reference proteome</keyword>
<keyword id="KW-0716">Sensory transduction</keyword>
<keyword id="KW-0919">Taste</keyword>
<keyword id="KW-0807">Transducer</keyword>
<keyword id="KW-0812">Transmembrane</keyword>
<keyword id="KW-1133">Transmembrane helix</keyword>
<comment type="function">
    <text evidence="1">Receptor that may play a role in the perception of bitterness and is gustducin-linked. May play a role in sensing the chemical composition of the gastrointestinal content. The activity of this receptor may stimulate alpha gustducin, mediate PLC-beta-2 activation and lead to the gating of TRPM5 (By similarity).</text>
</comment>
<comment type="subcellular location">
    <subcellularLocation>
        <location>Membrane</location>
        <topology>Multi-pass membrane protein</topology>
    </subcellularLocation>
</comment>
<comment type="miscellaneous">
    <text>Most taste cells may be activated by a limited number of bitter compounds; individual taste cells can discriminate among bitter stimuli.</text>
</comment>
<comment type="similarity">
    <text evidence="3">Belongs to the G-protein coupled receptor T2R family.</text>
</comment>
<feature type="chain" id="PRO_0000082336" description="Taste receptor type 2 member 50">
    <location>
        <begin position="1"/>
        <end position="299"/>
    </location>
</feature>
<feature type="topological domain" description="Extracellular" evidence="2">
    <location>
        <position position="1"/>
    </location>
</feature>
<feature type="transmembrane region" description="Helical; Name=1" evidence="2">
    <location>
        <begin position="2"/>
        <end position="22"/>
    </location>
</feature>
<feature type="topological domain" description="Cytoplasmic" evidence="2">
    <location>
        <begin position="23"/>
        <end position="55"/>
    </location>
</feature>
<feature type="transmembrane region" description="Helical; Name=2" evidence="2">
    <location>
        <begin position="56"/>
        <end position="76"/>
    </location>
</feature>
<feature type="topological domain" description="Extracellular" evidence="2">
    <location>
        <begin position="77"/>
        <end position="87"/>
    </location>
</feature>
<feature type="transmembrane region" description="Helical; Name=3" evidence="2">
    <location>
        <begin position="88"/>
        <end position="108"/>
    </location>
</feature>
<feature type="topological domain" description="Cytoplasmic" evidence="2">
    <location>
        <begin position="109"/>
        <end position="126"/>
    </location>
</feature>
<feature type="transmembrane region" description="Helical; Name=4" evidence="2">
    <location>
        <begin position="127"/>
        <end position="147"/>
    </location>
</feature>
<feature type="topological domain" description="Extracellular" evidence="2">
    <location>
        <begin position="148"/>
        <end position="181"/>
    </location>
</feature>
<feature type="transmembrane region" description="Helical; Name=5" evidence="2">
    <location>
        <begin position="182"/>
        <end position="202"/>
    </location>
</feature>
<feature type="topological domain" description="Cytoplasmic" evidence="2">
    <location>
        <begin position="203"/>
        <end position="229"/>
    </location>
</feature>
<feature type="transmembrane region" description="Helical; Name=6" evidence="2">
    <location>
        <begin position="230"/>
        <end position="250"/>
    </location>
</feature>
<feature type="topological domain" description="Extracellular" evidence="2">
    <location>
        <begin position="251"/>
        <end position="259"/>
    </location>
</feature>
<feature type="transmembrane region" description="Helical; Name=7" evidence="2">
    <location>
        <begin position="260"/>
        <end position="280"/>
    </location>
</feature>
<feature type="topological domain" description="Cytoplasmic" evidence="2">
    <location>
        <begin position="281"/>
        <end position="299"/>
    </location>
</feature>
<feature type="glycosylation site" description="N-linked (GlcNAc...) asparagine" evidence="2">
    <location>
        <position position="161"/>
    </location>
</feature>
<reference key="1">
    <citation type="journal article" date="2005" name="Mol. Biol. Evol.">
        <title>Evolution of bitter taste receptors in humans and apes.</title>
        <authorList>
            <person name="Fischer A."/>
            <person name="Gilad Y."/>
            <person name="Man O."/>
            <person name="Paeaebo S."/>
        </authorList>
    </citation>
    <scope>NUCLEOTIDE SEQUENCE [GENOMIC DNA]</scope>
</reference>
<name>T2R50_GORGO</name>
<evidence type="ECO:0000250" key="1"/>
<evidence type="ECO:0000255" key="2"/>
<evidence type="ECO:0000305" key="3"/>
<dbReference type="EMBL" id="AY724907">
    <property type="protein sequence ID" value="AAU21118.1"/>
    <property type="molecule type" value="Genomic_DNA"/>
</dbReference>
<dbReference type="RefSeq" id="XP_004052776.1">
    <property type="nucleotide sequence ID" value="XM_004052728.2"/>
</dbReference>
<dbReference type="SMR" id="Q646A1"/>
<dbReference type="FunCoup" id="Q646A1">
    <property type="interactions" value="197"/>
</dbReference>
<dbReference type="STRING" id="9593.ENSGGOP00000010188"/>
<dbReference type="GlyCosmos" id="Q646A1">
    <property type="glycosylation" value="1 site, No reported glycans"/>
</dbReference>
<dbReference type="Ensembl" id="ENSGGOT00000010487.3">
    <property type="protein sequence ID" value="ENSGGOP00000010188.2"/>
    <property type="gene ID" value="ENSGGOG00000038751.1"/>
</dbReference>
<dbReference type="eggNOG" id="ENOG502TE6U">
    <property type="taxonomic scope" value="Eukaryota"/>
</dbReference>
<dbReference type="GeneTree" id="ENSGT01100000263477"/>
<dbReference type="HOGENOM" id="CLU_072337_2_0_1"/>
<dbReference type="InParanoid" id="Q646A1"/>
<dbReference type="OMA" id="ILCQIRC"/>
<dbReference type="Proteomes" id="UP000001519">
    <property type="component" value="Chromosome 12"/>
</dbReference>
<dbReference type="Bgee" id="ENSGGOG00000038751">
    <property type="expression patterns" value="Expressed in multicellular organism"/>
</dbReference>
<dbReference type="GO" id="GO:0016020">
    <property type="term" value="C:membrane"/>
    <property type="evidence" value="ECO:0000318"/>
    <property type="project" value="GO_Central"/>
</dbReference>
<dbReference type="GO" id="GO:0005886">
    <property type="term" value="C:plasma membrane"/>
    <property type="evidence" value="ECO:0007669"/>
    <property type="project" value="UniProtKB-ARBA"/>
</dbReference>
<dbReference type="GO" id="GO:0033038">
    <property type="term" value="F:bitter taste receptor activity"/>
    <property type="evidence" value="ECO:0000318"/>
    <property type="project" value="GO_Central"/>
</dbReference>
<dbReference type="GO" id="GO:0004930">
    <property type="term" value="F:G protein-coupled receptor activity"/>
    <property type="evidence" value="ECO:0007669"/>
    <property type="project" value="UniProtKB-KW"/>
</dbReference>
<dbReference type="GO" id="GO:0001580">
    <property type="term" value="P:detection of chemical stimulus involved in sensory perception of bitter taste"/>
    <property type="evidence" value="ECO:0000318"/>
    <property type="project" value="GO_Central"/>
</dbReference>
<dbReference type="CDD" id="cd15027">
    <property type="entry name" value="7tm_TAS2R43-like"/>
    <property type="match status" value="1"/>
</dbReference>
<dbReference type="FunFam" id="1.20.1070.10:FF:000042">
    <property type="entry name" value="Taste receptor type 2 member 7"/>
    <property type="match status" value="1"/>
</dbReference>
<dbReference type="Gene3D" id="1.20.1070.10">
    <property type="entry name" value="Rhodopsin 7-helix transmembrane proteins"/>
    <property type="match status" value="1"/>
</dbReference>
<dbReference type="InterPro" id="IPR007960">
    <property type="entry name" value="TAS2R"/>
</dbReference>
<dbReference type="PANTHER" id="PTHR11394">
    <property type="entry name" value="TASTE RECEPTOR TYPE 2"/>
    <property type="match status" value="1"/>
</dbReference>
<dbReference type="PANTHER" id="PTHR11394:SF43">
    <property type="entry name" value="TASTE RECEPTOR TYPE 2 MEMBER 50"/>
    <property type="match status" value="1"/>
</dbReference>
<dbReference type="Pfam" id="PF05296">
    <property type="entry name" value="TAS2R"/>
    <property type="match status" value="1"/>
</dbReference>
<dbReference type="SUPFAM" id="SSF81321">
    <property type="entry name" value="Family A G protein-coupled receptor-like"/>
    <property type="match status" value="1"/>
</dbReference>
<accession>Q646A1</accession>
<protein>
    <recommendedName>
        <fullName>Taste receptor type 2 member 50</fullName>
        <shortName>T2R50</shortName>
    </recommendedName>
</protein>